<reference key="1">
    <citation type="journal article" date="1997" name="Nature">
        <title>The nucleotide sequence of Saccharomyces cerevisiae chromosome XIII.</title>
        <authorList>
            <person name="Bowman S."/>
            <person name="Churcher C.M."/>
            <person name="Badcock K."/>
            <person name="Brown D."/>
            <person name="Chillingworth T."/>
            <person name="Connor R."/>
            <person name="Dedman K."/>
            <person name="Devlin K."/>
            <person name="Gentles S."/>
            <person name="Hamlin N."/>
            <person name="Hunt S."/>
            <person name="Jagels K."/>
            <person name="Lye G."/>
            <person name="Moule S."/>
            <person name="Odell C."/>
            <person name="Pearson D."/>
            <person name="Rajandream M.A."/>
            <person name="Rice P."/>
            <person name="Skelton J."/>
            <person name="Walsh S.V."/>
            <person name="Whitehead S."/>
            <person name="Barrell B.G."/>
        </authorList>
    </citation>
    <scope>NUCLEOTIDE SEQUENCE [LARGE SCALE GENOMIC DNA]</scope>
    <source>
        <strain>ATCC 204508 / S288c</strain>
    </source>
</reference>
<reference key="2">
    <citation type="journal article" date="2014" name="G3 (Bethesda)">
        <title>The reference genome sequence of Saccharomyces cerevisiae: Then and now.</title>
        <authorList>
            <person name="Engel S.R."/>
            <person name="Dietrich F.S."/>
            <person name="Fisk D.G."/>
            <person name="Binkley G."/>
            <person name="Balakrishnan R."/>
            <person name="Costanzo M.C."/>
            <person name="Dwight S.S."/>
            <person name="Hitz B.C."/>
            <person name="Karra K."/>
            <person name="Nash R.S."/>
            <person name="Weng S."/>
            <person name="Wong E.D."/>
            <person name="Lloyd P."/>
            <person name="Skrzypek M.S."/>
            <person name="Miyasato S.R."/>
            <person name="Simison M."/>
            <person name="Cherry J.M."/>
        </authorList>
    </citation>
    <scope>GENOME REANNOTATION</scope>
    <source>
        <strain>ATCC 204508 / S288c</strain>
    </source>
</reference>
<reference key="3">
    <citation type="journal article" date="2007" name="Genome Res.">
        <title>Approaching a complete repository of sequence-verified protein-encoding clones for Saccharomyces cerevisiae.</title>
        <authorList>
            <person name="Hu Y."/>
            <person name="Rolfs A."/>
            <person name="Bhullar B."/>
            <person name="Murthy T.V.S."/>
            <person name="Zhu C."/>
            <person name="Berger M.F."/>
            <person name="Camargo A.A."/>
            <person name="Kelley F."/>
            <person name="McCarron S."/>
            <person name="Jepson D."/>
            <person name="Richardson A."/>
            <person name="Raphael J."/>
            <person name="Moreira D."/>
            <person name="Taycher E."/>
            <person name="Zuo D."/>
            <person name="Mohr S."/>
            <person name="Kane M.F."/>
            <person name="Williamson J."/>
            <person name="Simpson A.J.G."/>
            <person name="Bulyk M.L."/>
            <person name="Harlow E."/>
            <person name="Marsischky G."/>
            <person name="Kolodner R.D."/>
            <person name="LaBaer J."/>
        </authorList>
    </citation>
    <scope>NUCLEOTIDE SEQUENCE [GENOMIC DNA]</scope>
    <source>
        <strain>ATCC 204508 / S288c</strain>
    </source>
</reference>
<reference key="4">
    <citation type="journal article" date="2003" name="Nature">
        <title>Global analysis of protein expression in yeast.</title>
        <authorList>
            <person name="Ghaemmaghami S."/>
            <person name="Huh W.-K."/>
            <person name="Bower K."/>
            <person name="Howson R.W."/>
            <person name="Belle A."/>
            <person name="Dephoure N."/>
            <person name="O'Shea E.K."/>
            <person name="Weissman J.S."/>
        </authorList>
    </citation>
    <scope>LEVEL OF PROTEIN EXPRESSION [LARGE SCALE ANALYSIS]</scope>
</reference>
<reference key="5">
    <citation type="journal article" date="2003" name="Nat. Biotechnol.">
        <title>A proteomics approach to understanding protein ubiquitination.</title>
        <authorList>
            <person name="Peng J."/>
            <person name="Schwartz D."/>
            <person name="Elias J.E."/>
            <person name="Thoreen C.C."/>
            <person name="Cheng D."/>
            <person name="Marsischky G."/>
            <person name="Roelofs J."/>
            <person name="Finley D."/>
            <person name="Gygi S.P."/>
        </authorList>
    </citation>
    <scope>UBIQUITINATION [LARGE SCALE ANALYSIS] AT LYS-26 AND LYS-32</scope>
    <scope>IDENTIFICATION BY MASS SPECTROMETRY</scope>
    <source>
        <strain>SUB592</strain>
    </source>
</reference>
<reference key="6">
    <citation type="journal article" date="2007" name="Proc. Natl. Acad. Sci. U.S.A.">
        <title>Analysis of phosphorylation sites on proteins from Saccharomyces cerevisiae by electron transfer dissociation (ETD) mass spectrometry.</title>
        <authorList>
            <person name="Chi A."/>
            <person name="Huttenhower C."/>
            <person name="Geer L.Y."/>
            <person name="Coon J.J."/>
            <person name="Syka J.E.P."/>
            <person name="Bai D.L."/>
            <person name="Shabanowitz J."/>
            <person name="Burke D.J."/>
            <person name="Troyanskaya O.G."/>
            <person name="Hunt D.F."/>
        </authorList>
    </citation>
    <scope>PHOSPHORYLATION [LARGE SCALE ANALYSIS] AT SER-11 AND SER-23</scope>
    <scope>IDENTIFICATION BY MASS SPECTROMETRY [LARGE SCALE ANALYSIS]</scope>
</reference>
<reference key="7">
    <citation type="journal article" date="2008" name="Mol. Cell. Proteomics">
        <title>A multidimensional chromatography technology for in-depth phosphoproteome analysis.</title>
        <authorList>
            <person name="Albuquerque C.P."/>
            <person name="Smolka M.B."/>
            <person name="Payne S.H."/>
            <person name="Bafna V."/>
            <person name="Eng J."/>
            <person name="Zhou H."/>
        </authorList>
    </citation>
    <scope>IDENTIFICATION BY MASS SPECTROMETRY [LARGE SCALE ANALYSIS]</scope>
</reference>
<reference key="8">
    <citation type="journal article" date="2009" name="Science">
        <title>Global analysis of Cdk1 substrate phosphorylation sites provides insights into evolution.</title>
        <authorList>
            <person name="Holt L.J."/>
            <person name="Tuch B.B."/>
            <person name="Villen J."/>
            <person name="Johnson A.D."/>
            <person name="Gygi S.P."/>
            <person name="Morgan D.O."/>
        </authorList>
    </citation>
    <scope>IDENTIFICATION BY MASS SPECTROMETRY [LARGE SCALE ANALYSIS]</scope>
</reference>
<reference key="9">
    <citation type="journal article" date="2012" name="Proteomics">
        <title>Sites of ubiquitin attachment in Saccharomyces cerevisiae.</title>
        <authorList>
            <person name="Starita L.M."/>
            <person name="Lo R.S."/>
            <person name="Eng J.K."/>
            <person name="von Haller P.D."/>
            <person name="Fields S."/>
        </authorList>
    </citation>
    <scope>UBIQUITINATION [LARGE SCALE ANALYSIS] AT LYS-26 AND LYS-32</scope>
    <scope>IDENTIFICATION BY MASS SPECTROMETRY [LARGE SCALE ANALYSIS]</scope>
</reference>
<organism>
    <name type="scientific">Saccharomyces cerevisiae (strain ATCC 204508 / S288c)</name>
    <name type="common">Baker's yeast</name>
    <dbReference type="NCBI Taxonomy" id="559292"/>
    <lineage>
        <taxon>Eukaryota</taxon>
        <taxon>Fungi</taxon>
        <taxon>Dikarya</taxon>
        <taxon>Ascomycota</taxon>
        <taxon>Saccharomycotina</taxon>
        <taxon>Saccharomycetes</taxon>
        <taxon>Saccharomycetales</taxon>
        <taxon>Saccharomycetaceae</taxon>
        <taxon>Saccharomyces</taxon>
    </lineage>
</organism>
<protein>
    <recommendedName>
        <fullName>Uncharacterized protein YMR295C</fullName>
    </recommendedName>
</protein>
<keyword id="KW-1017">Isopeptide bond</keyword>
<keyword id="KW-0597">Phosphoprotein</keyword>
<keyword id="KW-1185">Reference proteome</keyword>
<keyword id="KW-0832">Ubl conjugation</keyword>
<comment type="miscellaneous">
    <text evidence="2">Present with 10800 molecules/cell in log phase SD medium.</text>
</comment>
<comment type="similarity">
    <text evidence="3">To yeast YGR273c.</text>
</comment>
<gene>
    <name type="ordered locus">YMR295C</name>
</gene>
<sequence length="197" mass="22179">MMHFRKKSSISNTSDHDGANRASDVKISEDDKARLKMRTASVADPILDAVQEAQPFEQAADTFHDNMNRQSYFSNEEGHVLCDVFGQPITQADISNPTRARDERPLDTIRSFEYAVSGDPVWAQQLETPTYGFRVRPDFPVFGAAVTYDANGMPQQVGGASSQMYGEQAVYQPQQHVQTEEKQKKKKKGLFGRMKKK</sequence>
<proteinExistence type="evidence at protein level"/>
<name>YM8V_YEAST</name>
<feature type="chain" id="PRO_0000203351" description="Uncharacterized protein YMR295C">
    <location>
        <begin position="1"/>
        <end position="197"/>
    </location>
</feature>
<feature type="region of interest" description="Disordered" evidence="1">
    <location>
        <begin position="1"/>
        <end position="31"/>
    </location>
</feature>
<feature type="region of interest" description="Disordered" evidence="1">
    <location>
        <begin position="157"/>
        <end position="197"/>
    </location>
</feature>
<feature type="compositionally biased region" description="Basic and acidic residues" evidence="1">
    <location>
        <begin position="14"/>
        <end position="31"/>
    </location>
</feature>
<feature type="compositionally biased region" description="Polar residues" evidence="1">
    <location>
        <begin position="158"/>
        <end position="177"/>
    </location>
</feature>
<feature type="compositionally biased region" description="Basic residues" evidence="1">
    <location>
        <begin position="184"/>
        <end position="197"/>
    </location>
</feature>
<feature type="modified residue" description="Phosphoserine" evidence="4">
    <location>
        <position position="11"/>
    </location>
</feature>
<feature type="modified residue" description="Phosphoserine" evidence="4">
    <location>
        <position position="23"/>
    </location>
</feature>
<feature type="cross-link" description="Glycyl lysine isopeptide (Lys-Gly) (interchain with G-Cter in ubiquitin)" evidence="5">
    <location>
        <position position="26"/>
    </location>
</feature>
<feature type="cross-link" description="Glycyl lysine isopeptide (Lys-Gly) (interchain with G-Cter in ubiquitin)" evidence="5">
    <location>
        <position position="32"/>
    </location>
</feature>
<accession>Q03559</accession>
<accession>D6W0C2</accession>
<evidence type="ECO:0000256" key="1">
    <source>
        <dbReference type="SAM" id="MobiDB-lite"/>
    </source>
</evidence>
<evidence type="ECO:0000269" key="2">
    <source>
    </source>
</evidence>
<evidence type="ECO:0000305" key="3"/>
<evidence type="ECO:0007744" key="4">
    <source>
    </source>
</evidence>
<evidence type="ECO:0007744" key="5">
    <source>
    </source>
</evidence>
<dbReference type="EMBL" id="X80836">
    <property type="protein sequence ID" value="CAA56804.1"/>
    <property type="molecule type" value="Genomic_DNA"/>
</dbReference>
<dbReference type="EMBL" id="AY557969">
    <property type="protein sequence ID" value="AAS56295.1"/>
    <property type="molecule type" value="Genomic_DNA"/>
</dbReference>
<dbReference type="EMBL" id="BK006946">
    <property type="protein sequence ID" value="DAA10196.1"/>
    <property type="molecule type" value="Genomic_DNA"/>
</dbReference>
<dbReference type="PIR" id="S47456">
    <property type="entry name" value="S47456"/>
</dbReference>
<dbReference type="BioGRID" id="35475">
    <property type="interactions" value="107"/>
</dbReference>
<dbReference type="DIP" id="DIP-1843N"/>
<dbReference type="FunCoup" id="Q03559">
    <property type="interactions" value="101"/>
</dbReference>
<dbReference type="IntAct" id="Q03559">
    <property type="interactions" value="10"/>
</dbReference>
<dbReference type="MINT" id="Q03559"/>
<dbReference type="STRING" id="4932.YMR295C"/>
<dbReference type="iPTMnet" id="Q03559"/>
<dbReference type="PaxDb" id="4932-YMR295C"/>
<dbReference type="PeptideAtlas" id="Q03559"/>
<dbReference type="EnsemblFungi" id="YMR295C_mRNA">
    <property type="protein sequence ID" value="YMR295C"/>
    <property type="gene ID" value="YMR295C"/>
</dbReference>
<dbReference type="KEGG" id="sce:YMR295C"/>
<dbReference type="AGR" id="SGD:S000004910"/>
<dbReference type="SGD" id="S000004910">
    <property type="gene designation" value="YMR295C"/>
</dbReference>
<dbReference type="VEuPathDB" id="FungiDB:YMR295C"/>
<dbReference type="eggNOG" id="ENOG502RXHE">
    <property type="taxonomic scope" value="Eukaryota"/>
</dbReference>
<dbReference type="GeneTree" id="ENSGT00940000176586"/>
<dbReference type="HOGENOM" id="CLU_103810_0_0_1"/>
<dbReference type="InParanoid" id="Q03559"/>
<dbReference type="OMA" id="HEDFPYY"/>
<dbReference type="OrthoDB" id="5330253at2759"/>
<dbReference type="BioCyc" id="YEAST:G3O-32965-MONOMER"/>
<dbReference type="BioGRID-ORCS" id="855341">
    <property type="hits" value="0 hits in 10 CRISPR screens"/>
</dbReference>
<dbReference type="ChiTaRS" id="YMR295C">
    <property type="organism name" value="yeast"/>
</dbReference>
<dbReference type="PRO" id="PR:Q03559"/>
<dbReference type="Proteomes" id="UP000002311">
    <property type="component" value="Chromosome XIII"/>
</dbReference>
<dbReference type="RNAct" id="Q03559">
    <property type="molecule type" value="protein"/>
</dbReference>
<dbReference type="GO" id="GO:0071944">
    <property type="term" value="C:cell periphery"/>
    <property type="evidence" value="ECO:0007005"/>
    <property type="project" value="SGD"/>
</dbReference>
<dbReference type="GO" id="GO:0005933">
    <property type="term" value="C:cellular bud"/>
    <property type="evidence" value="ECO:0007005"/>
    <property type="project" value="SGD"/>
</dbReference>
<dbReference type="GO" id="GO:0005935">
    <property type="term" value="C:cellular bud neck"/>
    <property type="evidence" value="ECO:0007005"/>
    <property type="project" value="SGD"/>
</dbReference>
<dbReference type="GO" id="GO:0005934">
    <property type="term" value="C:cellular bud tip"/>
    <property type="evidence" value="ECO:0007005"/>
    <property type="project" value="SGD"/>
</dbReference>
<dbReference type="GO" id="GO:0043332">
    <property type="term" value="C:mating projection tip"/>
    <property type="evidence" value="ECO:0007005"/>
    <property type="project" value="SGD"/>
</dbReference>
<dbReference type="GO" id="GO:0090334">
    <property type="term" value="P:regulation of cell wall (1-&gt;3)-beta-D-glucan biosynthetic process"/>
    <property type="evidence" value="ECO:0000316"/>
    <property type="project" value="SGD"/>
</dbReference>
<dbReference type="InterPro" id="IPR018809">
    <property type="entry name" value="DUF2406"/>
</dbReference>
<dbReference type="PANTHER" id="PTHR28186">
    <property type="entry name" value="MEIOTICALLY UP-REGULATED GENE 9 PROTEIN"/>
    <property type="match status" value="1"/>
</dbReference>
<dbReference type="PANTHER" id="PTHR28186:SF1">
    <property type="entry name" value="MEIOTICALLY UP-REGULATED GENE 9 PROTEIN"/>
    <property type="match status" value="1"/>
</dbReference>
<dbReference type="Pfam" id="PF10295">
    <property type="entry name" value="DUF2406"/>
    <property type="match status" value="1"/>
</dbReference>